<keyword id="KW-0539">Nucleus</keyword>
<keyword id="KW-1185">Reference proteome</keyword>
<keyword id="KW-0677">Repeat</keyword>
<keyword id="KW-0853">WD repeat</keyword>
<gene>
    <name evidence="5" type="primary">RBL</name>
    <name evidence="8" type="ordered locus">At3g21060</name>
    <name evidence="10" type="ORF">MSA6.10</name>
</gene>
<sequence>MNAPIIDPLQGDFPEVIEEYLEHGVIKCVAFNHRGSLLAAGCADGGCVIWDFETRGIAKEIRDNDCSAAITSVSWSKYGHRLLVSAADKSLTLWDVSTGEKIARTILQQTPLQARLNPGLSSPSLCLACPLSSAPMIVDFDIDCTTLLPVSVPEMPDVLAPPQRSKCPESNPPFSPAAACFNKCGDLVYIGNSKGEILIVDYKSVRVLALVSASGAAPVKNIVFSRNGQYLLTNSHDRTIRIYENLLPAKNVLKSLEDLGKNIDGLDGIEKMKTVGSKCLTLFREFQDSVTKMHWKAPCFSGDGEWVVGGSACKGEHKIYIWDRAGHLVKILEGPKEALIDLAWHPVHPIIVSVSLAGLVYIWAKDYTENWSAFAPDFKELEENEEYVEREDEFDLIPETEKVKVLDVNEDEEVDIDTVEKDAFSDSDMSVEELRYLPAEPIPDTNDQQDNLVESIKLIEGQISASPASEEAGQNGHHASSPQAEEMGETRGKRKRKPSEKAMELQAEKAKPLKGSGKTVRAKNRAAFDQETDDSINGGDDDDDAYY</sequence>
<feature type="chain" id="PRO_0000431781" description="Protein RBL">
    <location>
        <begin position="1"/>
        <end position="547"/>
    </location>
</feature>
<feature type="repeat" description="WD 1" evidence="1">
    <location>
        <begin position="21"/>
        <end position="60"/>
    </location>
</feature>
<feature type="repeat" description="WD 2" evidence="1">
    <location>
        <begin position="65"/>
        <end position="104"/>
    </location>
</feature>
<feature type="repeat" description="WD 3" evidence="1">
    <location>
        <begin position="214"/>
        <end position="253"/>
    </location>
</feature>
<feature type="repeat" description="WD 4" evidence="1">
    <location>
        <begin position="285"/>
        <end position="332"/>
    </location>
</feature>
<feature type="repeat" description="WD 5" evidence="1">
    <location>
        <begin position="334"/>
        <end position="373"/>
    </location>
</feature>
<feature type="region of interest" description="Disordered" evidence="2">
    <location>
        <begin position="466"/>
        <end position="547"/>
    </location>
</feature>
<feature type="compositionally biased region" description="Basic and acidic residues" evidence="2">
    <location>
        <begin position="499"/>
        <end position="511"/>
    </location>
</feature>
<feature type="compositionally biased region" description="Acidic residues" evidence="2">
    <location>
        <begin position="530"/>
        <end position="547"/>
    </location>
</feature>
<feature type="sequence conflict" description="In Ref. 3; AAO42218." evidence="7" ref="3">
    <original>K</original>
    <variation>E</variation>
    <location>
        <position position="220"/>
    </location>
</feature>
<comment type="function">
    <text evidence="3 4">Promotes the expression of FLC and FLC homologs to repress the floral transition (PubMed:21423667). Promotes WRKY70 and LTP7 genes epigenetic methylation (e.g. H3K4me3) and subsequent expression (PubMed:23284292).</text>
</comment>
<comment type="subunit">
    <text evidence="3">Part of a complex composed of TRO, RBL and WDR5A. Interacts with TRO and WDR5A, but not with WDR5B. This complex is formed during both vegetative and reproductive development.</text>
</comment>
<comment type="subcellular location">
    <subcellularLocation>
        <location evidence="3">Nucleus</location>
    </subcellularLocation>
</comment>
<comment type="tissue specificity">
    <text evidence="3">Strongly expressed in root tips, shoot apices, vascular tissues, developing embryos and endosperms.</text>
</comment>
<comment type="disruption phenotype">
    <text evidence="4">Eearly flowering (PubMed:23284292). Significantly reduced trimethylated 'Lys-4' of histone H3 (H3K4me3) levels at the 5'-ends of WRKY70 and LTP7 genes leading to reduced transcript accumulation (PubMed:23284292).</text>
</comment>
<comment type="sequence caution" evidence="7">
    <conflict type="erroneous gene model prediction">
        <sequence resource="EMBL-CDS" id="BAB01449"/>
    </conflict>
</comment>
<protein>
    <recommendedName>
        <fullName evidence="5">Protein RBL</fullName>
    </recommendedName>
    <alternativeName>
        <fullName evidence="5">COMPASS-like H3K4 histone methylation complex component RBL</fullName>
    </alternativeName>
    <alternativeName>
        <fullName evidence="5">RBBP5-like protein</fullName>
        <shortName evidence="6">AtRbBp5</shortName>
    </alternativeName>
    <alternativeName>
        <fullName evidence="5">Retinoblastoma-binding protein-like</fullName>
    </alternativeName>
</protein>
<proteinExistence type="evidence at protein level"/>
<reference key="1">
    <citation type="journal article" date="2000" name="DNA Res.">
        <title>Structural analysis of Arabidopsis thaliana chromosome 3. II. Sequence features of the 4,251,695 bp regions covered by 90 P1, TAC and BAC clones.</title>
        <authorList>
            <person name="Kaneko T."/>
            <person name="Katoh T."/>
            <person name="Sato S."/>
            <person name="Nakamura Y."/>
            <person name="Asamizu E."/>
            <person name="Tabata S."/>
        </authorList>
    </citation>
    <scope>NUCLEOTIDE SEQUENCE [LARGE SCALE GENOMIC DNA]</scope>
    <source>
        <strain>cv. Columbia</strain>
    </source>
</reference>
<reference key="2">
    <citation type="journal article" date="2017" name="Plant J.">
        <title>Araport11: a complete reannotation of the Arabidopsis thaliana reference genome.</title>
        <authorList>
            <person name="Cheng C.Y."/>
            <person name="Krishnakumar V."/>
            <person name="Chan A.P."/>
            <person name="Thibaud-Nissen F."/>
            <person name="Schobel S."/>
            <person name="Town C.D."/>
        </authorList>
    </citation>
    <scope>GENOME REANNOTATION</scope>
    <source>
        <strain>cv. Columbia</strain>
    </source>
</reference>
<reference key="3">
    <citation type="journal article" date="2003" name="Science">
        <title>Empirical analysis of transcriptional activity in the Arabidopsis genome.</title>
        <authorList>
            <person name="Yamada K."/>
            <person name="Lim J."/>
            <person name="Dale J.M."/>
            <person name="Chen H."/>
            <person name="Shinn P."/>
            <person name="Palm C.J."/>
            <person name="Southwick A.M."/>
            <person name="Wu H.C."/>
            <person name="Kim C.J."/>
            <person name="Nguyen M."/>
            <person name="Pham P.K."/>
            <person name="Cheuk R.F."/>
            <person name="Karlin-Newmann G."/>
            <person name="Liu S.X."/>
            <person name="Lam B."/>
            <person name="Sakano H."/>
            <person name="Wu T."/>
            <person name="Yu G."/>
            <person name="Miranda M."/>
            <person name="Quach H.L."/>
            <person name="Tripp M."/>
            <person name="Chang C.H."/>
            <person name="Lee J.M."/>
            <person name="Toriumi M.J."/>
            <person name="Chan M.M."/>
            <person name="Tang C.C."/>
            <person name="Onodera C.S."/>
            <person name="Deng J.M."/>
            <person name="Akiyama K."/>
            <person name="Ansari Y."/>
            <person name="Arakawa T."/>
            <person name="Banh J."/>
            <person name="Banno F."/>
            <person name="Bowser L."/>
            <person name="Brooks S.Y."/>
            <person name="Carninci P."/>
            <person name="Chao Q."/>
            <person name="Choy N."/>
            <person name="Enju A."/>
            <person name="Goldsmith A.D."/>
            <person name="Gurjal M."/>
            <person name="Hansen N.F."/>
            <person name="Hayashizaki Y."/>
            <person name="Johnson-Hopson C."/>
            <person name="Hsuan V.W."/>
            <person name="Iida K."/>
            <person name="Karnes M."/>
            <person name="Khan S."/>
            <person name="Koesema E."/>
            <person name="Ishida J."/>
            <person name="Jiang P.X."/>
            <person name="Jones T."/>
            <person name="Kawai J."/>
            <person name="Kamiya A."/>
            <person name="Meyers C."/>
            <person name="Nakajima M."/>
            <person name="Narusaka M."/>
            <person name="Seki M."/>
            <person name="Sakurai T."/>
            <person name="Satou M."/>
            <person name="Tamse R."/>
            <person name="Vaysberg M."/>
            <person name="Wallender E.K."/>
            <person name="Wong C."/>
            <person name="Yamamura Y."/>
            <person name="Yuan S."/>
            <person name="Shinozaki K."/>
            <person name="Davis R.W."/>
            <person name="Theologis A."/>
            <person name="Ecker J.R."/>
        </authorList>
    </citation>
    <scope>NUCLEOTIDE SEQUENCE [LARGE SCALE MRNA]</scope>
    <source>
        <strain>cv. Columbia</strain>
    </source>
</reference>
<reference key="4">
    <citation type="submission" date="2005-02" db="EMBL/GenBank/DDBJ databases">
        <title>Arabidopsis ORF clones.</title>
        <authorList>
            <person name="Cheuk R."/>
            <person name="Chen H."/>
            <person name="Kim C.J."/>
            <person name="Shinn P."/>
            <person name="Ecker J.R."/>
        </authorList>
    </citation>
    <scope>NUCLEOTIDE SEQUENCE [LARGE SCALE MRNA]</scope>
    <source>
        <strain>cv. Columbia</strain>
    </source>
</reference>
<reference key="5">
    <citation type="journal article" date="2009" name="DNA Res.">
        <title>Analysis of multiple occurrences of alternative splicing events in Arabidopsis thaliana using novel sequenced full-length cDNAs.</title>
        <authorList>
            <person name="Iida K."/>
            <person name="Fukami-Kobayashi K."/>
            <person name="Toyoda A."/>
            <person name="Sakaki Y."/>
            <person name="Kobayashi M."/>
            <person name="Seki M."/>
            <person name="Shinozaki K."/>
        </authorList>
    </citation>
    <scope>NUCLEOTIDE SEQUENCE [LARGE SCALE MRNA] OF 266-547</scope>
    <source>
        <strain>cv. Columbia</strain>
    </source>
</reference>
<reference key="6">
    <citation type="journal article" date="2011" name="PLoS Genet.">
        <title>Arabidopsis COMPASS-like complexes mediate histone H3 lysine-4 trimethylation to control floral transition and plant development.</title>
        <authorList>
            <person name="Jiang D."/>
            <person name="Kong N.C."/>
            <person name="Gu X."/>
            <person name="Li Z."/>
            <person name="He Y."/>
        </authorList>
    </citation>
    <scope>FUNCTION</scope>
    <scope>TISSUE SPECIFICITY</scope>
    <scope>INTERACTION WITH TRO AND WDR5A</scope>
    <scope>SUBCELLULAR LOCATION</scope>
</reference>
<reference key="7">
    <citation type="journal article" date="2012" name="PLoS Genet.">
        <title>ATX1-generated H3K4me3 is required for efficient elongation of transcription, not initiation, at ATX1-regulated genes.</title>
        <authorList>
            <person name="Ding Y."/>
            <person name="Ndamukong I."/>
            <person name="Xu Z."/>
            <person name="Lapko H."/>
            <person name="Fromm M."/>
            <person name="Avramova Z."/>
        </authorList>
    </citation>
    <scope>FUNCTION</scope>
    <scope>DISRUPTION PHENOTYPE</scope>
    <source>
        <strain>cv. Wassilewskija</strain>
    </source>
</reference>
<name>RBBP_ARATH</name>
<accession>Q5E915</accession>
<accession>B9DHL4</accession>
<accession>Q84W60</accession>
<accession>Q9LJC6</accession>
<evidence type="ECO:0000255" key="1"/>
<evidence type="ECO:0000256" key="2">
    <source>
        <dbReference type="SAM" id="MobiDB-lite"/>
    </source>
</evidence>
<evidence type="ECO:0000269" key="3">
    <source>
    </source>
</evidence>
<evidence type="ECO:0000269" key="4">
    <source>
    </source>
</evidence>
<evidence type="ECO:0000303" key="5">
    <source>
    </source>
</evidence>
<evidence type="ECO:0000303" key="6">
    <source>
    </source>
</evidence>
<evidence type="ECO:0000305" key="7"/>
<evidence type="ECO:0000312" key="8">
    <source>
        <dbReference type="Araport" id="AT3G21060"/>
    </source>
</evidence>
<evidence type="ECO:0000312" key="9">
    <source>
        <dbReference type="EMBL" id="AAX12875.1"/>
    </source>
</evidence>
<evidence type="ECO:0000312" key="10">
    <source>
        <dbReference type="EMBL" id="BAB01449.1"/>
    </source>
</evidence>
<organism evidence="9">
    <name type="scientific">Arabidopsis thaliana</name>
    <name type="common">Mouse-ear cress</name>
    <dbReference type="NCBI Taxonomy" id="3702"/>
    <lineage>
        <taxon>Eukaryota</taxon>
        <taxon>Viridiplantae</taxon>
        <taxon>Streptophyta</taxon>
        <taxon>Embryophyta</taxon>
        <taxon>Tracheophyta</taxon>
        <taxon>Spermatophyta</taxon>
        <taxon>Magnoliopsida</taxon>
        <taxon>eudicotyledons</taxon>
        <taxon>Gunneridae</taxon>
        <taxon>Pentapetalae</taxon>
        <taxon>rosids</taxon>
        <taxon>malvids</taxon>
        <taxon>Brassicales</taxon>
        <taxon>Brassicaceae</taxon>
        <taxon>Camelineae</taxon>
        <taxon>Arabidopsis</taxon>
    </lineage>
</organism>
<dbReference type="EMBL" id="AP000604">
    <property type="protein sequence ID" value="BAB01449.1"/>
    <property type="status" value="ALT_SEQ"/>
    <property type="molecule type" value="Genomic_DNA"/>
</dbReference>
<dbReference type="EMBL" id="CP002686">
    <property type="protein sequence ID" value="AEE76455.1"/>
    <property type="molecule type" value="Genomic_DNA"/>
</dbReference>
<dbReference type="EMBL" id="BT004200">
    <property type="protein sequence ID" value="AAO42218.1"/>
    <property type="molecule type" value="mRNA"/>
</dbReference>
<dbReference type="EMBL" id="BT021105">
    <property type="protein sequence ID" value="AAX12875.1"/>
    <property type="molecule type" value="mRNA"/>
</dbReference>
<dbReference type="EMBL" id="AK317567">
    <property type="protein sequence ID" value="BAH20231.1"/>
    <property type="molecule type" value="mRNA"/>
</dbReference>
<dbReference type="RefSeq" id="NP_188743.3">
    <property type="nucleotide sequence ID" value="NM_113000.6"/>
</dbReference>
<dbReference type="SMR" id="Q5E915"/>
<dbReference type="FunCoup" id="Q5E915">
    <property type="interactions" value="3874"/>
</dbReference>
<dbReference type="STRING" id="3702.Q5E915"/>
<dbReference type="iPTMnet" id="Q5E915"/>
<dbReference type="PaxDb" id="3702-AT3G21060.1"/>
<dbReference type="ProteomicsDB" id="236506"/>
<dbReference type="EnsemblPlants" id="AT3G21060.1">
    <property type="protein sequence ID" value="AT3G21060.1"/>
    <property type="gene ID" value="AT3G21060"/>
</dbReference>
<dbReference type="GeneID" id="821658"/>
<dbReference type="Gramene" id="AT3G21060.1">
    <property type="protein sequence ID" value="AT3G21060.1"/>
    <property type="gene ID" value="AT3G21060"/>
</dbReference>
<dbReference type="KEGG" id="ath:AT3G21060"/>
<dbReference type="Araport" id="AT3G21060"/>
<dbReference type="TAIR" id="AT3G21060">
    <property type="gene designation" value="RBL"/>
</dbReference>
<dbReference type="eggNOG" id="KOG1273">
    <property type="taxonomic scope" value="Eukaryota"/>
</dbReference>
<dbReference type="HOGENOM" id="CLU_032142_2_2_1"/>
<dbReference type="InParanoid" id="Q5E915"/>
<dbReference type="OMA" id="DYEDDIM"/>
<dbReference type="PhylomeDB" id="Q5E915"/>
<dbReference type="PRO" id="PR:Q5E915"/>
<dbReference type="Proteomes" id="UP000006548">
    <property type="component" value="Chromosome 3"/>
</dbReference>
<dbReference type="ExpressionAtlas" id="Q5E915">
    <property type="expression patterns" value="baseline and differential"/>
</dbReference>
<dbReference type="GO" id="GO:0005634">
    <property type="term" value="C:nucleus"/>
    <property type="evidence" value="ECO:0000314"/>
    <property type="project" value="TAIR"/>
</dbReference>
<dbReference type="GO" id="GO:0048188">
    <property type="term" value="C:Set1C/COMPASS complex"/>
    <property type="evidence" value="ECO:0007669"/>
    <property type="project" value="InterPro"/>
</dbReference>
<dbReference type="GO" id="GO:0010228">
    <property type="term" value="P:vegetative to reproductive phase transition of meristem"/>
    <property type="evidence" value="ECO:0000315"/>
    <property type="project" value="TAIR"/>
</dbReference>
<dbReference type="FunFam" id="2.130.10.10:FF:000649">
    <property type="entry name" value="Compass component swd1"/>
    <property type="match status" value="1"/>
</dbReference>
<dbReference type="FunFam" id="2.130.10.10:FF:001358">
    <property type="entry name" value="Retinoblastoma-binding-like protein E"/>
    <property type="match status" value="1"/>
</dbReference>
<dbReference type="Gene3D" id="2.130.10.10">
    <property type="entry name" value="YVTN repeat-like/Quinoprotein amine dehydrogenase"/>
    <property type="match status" value="2"/>
</dbReference>
<dbReference type="InterPro" id="IPR037850">
    <property type="entry name" value="RBBP5/Swd1"/>
</dbReference>
<dbReference type="InterPro" id="IPR015943">
    <property type="entry name" value="WD40/YVTN_repeat-like_dom_sf"/>
</dbReference>
<dbReference type="InterPro" id="IPR019775">
    <property type="entry name" value="WD40_repeat_CS"/>
</dbReference>
<dbReference type="InterPro" id="IPR036322">
    <property type="entry name" value="WD40_repeat_dom_sf"/>
</dbReference>
<dbReference type="InterPro" id="IPR001680">
    <property type="entry name" value="WD40_rpt"/>
</dbReference>
<dbReference type="PANTHER" id="PTHR44040">
    <property type="entry name" value="RETINOBLASTOMA-BINDING PROTEIN 5"/>
    <property type="match status" value="1"/>
</dbReference>
<dbReference type="PANTHER" id="PTHR44040:SF1">
    <property type="entry name" value="RETINOBLASTOMA-BINDING PROTEIN 5"/>
    <property type="match status" value="1"/>
</dbReference>
<dbReference type="Pfam" id="PF00400">
    <property type="entry name" value="WD40"/>
    <property type="match status" value="4"/>
</dbReference>
<dbReference type="SMART" id="SM00320">
    <property type="entry name" value="WD40"/>
    <property type="match status" value="5"/>
</dbReference>
<dbReference type="SUPFAM" id="SSF50978">
    <property type="entry name" value="WD40 repeat-like"/>
    <property type="match status" value="1"/>
</dbReference>
<dbReference type="PROSITE" id="PS00678">
    <property type="entry name" value="WD_REPEATS_1"/>
    <property type="match status" value="1"/>
</dbReference>
<dbReference type="PROSITE" id="PS50082">
    <property type="entry name" value="WD_REPEATS_2"/>
    <property type="match status" value="3"/>
</dbReference>
<dbReference type="PROSITE" id="PS50294">
    <property type="entry name" value="WD_REPEATS_REGION"/>
    <property type="match status" value="1"/>
</dbReference>